<keyword id="KW-0963">Cytoplasm</keyword>
<keyword id="KW-0378">Hydrolase</keyword>
<keyword id="KW-0464">Manganese</keyword>
<keyword id="KW-0479">Metal-binding</keyword>
<keyword id="KW-1185">Reference proteome</keyword>
<sequence length="309" mass="33692">MEKVLVFGHKNPDTDAICSAIAYAELKKELGMNAEPVRLGEISGETQFALDYFKVEGPRFVETVASEVDNVILVDHNERQQSANDIESVRVLEVIDHHRIANFETSDPIYYRCEPVGCTATILNKMYKENGVTIRKEVAGLMLSAIISDSLLFKSPTCTEQDVAAARELAQIAGVDADNYGLEMLKAGADLSGKTMEQLISLDAKEFQMGNAKVEIAQVNAVDTNDVLVHQAELEKVISAVVEEKGLDLFLFVVTDILTNDSVGLAIGKAANVVEKAYNVSLENNTATLKGVVSRKKQIVPVLTEAFQA</sequence>
<proteinExistence type="inferred from homology"/>
<comment type="catalytic activity">
    <reaction evidence="1">
        <text>diphosphate + H2O = 2 phosphate + H(+)</text>
        <dbReference type="Rhea" id="RHEA:24576"/>
        <dbReference type="ChEBI" id="CHEBI:15377"/>
        <dbReference type="ChEBI" id="CHEBI:15378"/>
        <dbReference type="ChEBI" id="CHEBI:33019"/>
        <dbReference type="ChEBI" id="CHEBI:43474"/>
        <dbReference type="EC" id="3.6.1.1"/>
    </reaction>
</comment>
<comment type="cofactor">
    <cofactor evidence="1">
        <name>Mn(2+)</name>
        <dbReference type="ChEBI" id="CHEBI:29035"/>
    </cofactor>
    <text evidence="1">Binds 2 manganese ions per subunit.</text>
</comment>
<comment type="subcellular location">
    <subcellularLocation>
        <location evidence="1">Cytoplasm</location>
    </subcellularLocation>
</comment>
<comment type="similarity">
    <text evidence="1">Belongs to the PPase class C family.</text>
</comment>
<gene>
    <name evidence="1" type="primary">ppaC</name>
    <name type="ordered locus">BC_2826</name>
</gene>
<name>PPAC_BACCR</name>
<accession>Q81CE5</accession>
<protein>
    <recommendedName>
        <fullName evidence="1">Probable manganese-dependent inorganic pyrophosphatase</fullName>
        <ecNumber evidence="1">3.6.1.1</ecNumber>
    </recommendedName>
    <alternativeName>
        <fullName evidence="1">Pyrophosphate phospho-hydrolase</fullName>
        <shortName evidence="1">PPase</shortName>
    </alternativeName>
</protein>
<organism>
    <name type="scientific">Bacillus cereus (strain ATCC 14579 / DSM 31 / CCUG 7414 / JCM 2152 / NBRC 15305 / NCIMB 9373 / NCTC 2599 / NRRL B-3711)</name>
    <dbReference type="NCBI Taxonomy" id="226900"/>
    <lineage>
        <taxon>Bacteria</taxon>
        <taxon>Bacillati</taxon>
        <taxon>Bacillota</taxon>
        <taxon>Bacilli</taxon>
        <taxon>Bacillales</taxon>
        <taxon>Bacillaceae</taxon>
        <taxon>Bacillus</taxon>
        <taxon>Bacillus cereus group</taxon>
    </lineage>
</organism>
<evidence type="ECO:0000255" key="1">
    <source>
        <dbReference type="HAMAP-Rule" id="MF_00207"/>
    </source>
</evidence>
<feature type="chain" id="PRO_0000158567" description="Probable manganese-dependent inorganic pyrophosphatase">
    <location>
        <begin position="1"/>
        <end position="309"/>
    </location>
</feature>
<feature type="binding site" evidence="1">
    <location>
        <position position="9"/>
    </location>
    <ligand>
        <name>Mn(2+)</name>
        <dbReference type="ChEBI" id="CHEBI:29035"/>
        <label>1</label>
    </ligand>
</feature>
<feature type="binding site" evidence="1">
    <location>
        <position position="13"/>
    </location>
    <ligand>
        <name>Mn(2+)</name>
        <dbReference type="ChEBI" id="CHEBI:29035"/>
        <label>1</label>
    </ligand>
</feature>
<feature type="binding site" evidence="1">
    <location>
        <position position="15"/>
    </location>
    <ligand>
        <name>Mn(2+)</name>
        <dbReference type="ChEBI" id="CHEBI:29035"/>
        <label>2</label>
    </ligand>
</feature>
<feature type="binding site" evidence="1">
    <location>
        <position position="75"/>
    </location>
    <ligand>
        <name>Mn(2+)</name>
        <dbReference type="ChEBI" id="CHEBI:29035"/>
        <label>1</label>
    </ligand>
</feature>
<feature type="binding site" evidence="1">
    <location>
        <position position="75"/>
    </location>
    <ligand>
        <name>Mn(2+)</name>
        <dbReference type="ChEBI" id="CHEBI:29035"/>
        <label>2</label>
    </ligand>
</feature>
<feature type="binding site" evidence="1">
    <location>
        <position position="97"/>
    </location>
    <ligand>
        <name>Mn(2+)</name>
        <dbReference type="ChEBI" id="CHEBI:29035"/>
        <label>2</label>
    </ligand>
</feature>
<feature type="binding site" evidence="1">
    <location>
        <position position="149"/>
    </location>
    <ligand>
        <name>Mn(2+)</name>
        <dbReference type="ChEBI" id="CHEBI:29035"/>
        <label>2</label>
    </ligand>
</feature>
<dbReference type="EC" id="3.6.1.1" evidence="1"/>
<dbReference type="EMBL" id="AE016877">
    <property type="protein sequence ID" value="AAP09777.1"/>
    <property type="molecule type" value="Genomic_DNA"/>
</dbReference>
<dbReference type="RefSeq" id="NP_832576.1">
    <property type="nucleotide sequence ID" value="NC_004722.1"/>
</dbReference>
<dbReference type="RefSeq" id="WP_000416873.1">
    <property type="nucleotide sequence ID" value="NZ_CP138336.1"/>
</dbReference>
<dbReference type="SMR" id="Q81CE5"/>
<dbReference type="STRING" id="226900.BC_2826"/>
<dbReference type="MetOSite" id="Q81CE5"/>
<dbReference type="KEGG" id="bce:BC2826"/>
<dbReference type="PATRIC" id="fig|226900.8.peg.2887"/>
<dbReference type="HOGENOM" id="CLU_025243_0_1_9"/>
<dbReference type="OrthoDB" id="9766150at2"/>
<dbReference type="Proteomes" id="UP000001417">
    <property type="component" value="Chromosome"/>
</dbReference>
<dbReference type="GO" id="GO:0005737">
    <property type="term" value="C:cytoplasm"/>
    <property type="evidence" value="ECO:0000318"/>
    <property type="project" value="GO_Central"/>
</dbReference>
<dbReference type="GO" id="GO:0004427">
    <property type="term" value="F:inorganic diphosphate phosphatase activity"/>
    <property type="evidence" value="ECO:0007669"/>
    <property type="project" value="UniProtKB-UniRule"/>
</dbReference>
<dbReference type="GO" id="GO:0030145">
    <property type="term" value="F:manganese ion binding"/>
    <property type="evidence" value="ECO:0007669"/>
    <property type="project" value="UniProtKB-UniRule"/>
</dbReference>
<dbReference type="FunFam" id="3.10.310.20:FF:000001">
    <property type="entry name" value="Probable manganese-dependent inorganic pyrophosphatase"/>
    <property type="match status" value="1"/>
</dbReference>
<dbReference type="FunFam" id="3.90.1640.10:FF:000001">
    <property type="entry name" value="Probable manganese-dependent inorganic pyrophosphatase"/>
    <property type="match status" value="1"/>
</dbReference>
<dbReference type="Gene3D" id="3.10.310.20">
    <property type="entry name" value="DHHA2 domain"/>
    <property type="match status" value="1"/>
</dbReference>
<dbReference type="Gene3D" id="3.90.1640.10">
    <property type="entry name" value="inorganic pyrophosphatase (n-terminal core)"/>
    <property type="match status" value="1"/>
</dbReference>
<dbReference type="HAMAP" id="MF_00207">
    <property type="entry name" value="PPase_C"/>
    <property type="match status" value="1"/>
</dbReference>
<dbReference type="InterPro" id="IPR001667">
    <property type="entry name" value="DDH_dom"/>
</dbReference>
<dbReference type="InterPro" id="IPR038763">
    <property type="entry name" value="DHH_sf"/>
</dbReference>
<dbReference type="InterPro" id="IPR004097">
    <property type="entry name" value="DHHA2"/>
</dbReference>
<dbReference type="InterPro" id="IPR038222">
    <property type="entry name" value="DHHA2_dom_sf"/>
</dbReference>
<dbReference type="InterPro" id="IPR022934">
    <property type="entry name" value="Mn-dep_inorganic_PyrPase"/>
</dbReference>
<dbReference type="NCBIfam" id="NF003877">
    <property type="entry name" value="PRK05427.1"/>
    <property type="match status" value="1"/>
</dbReference>
<dbReference type="PANTHER" id="PTHR12112">
    <property type="entry name" value="BNIP - RELATED"/>
    <property type="match status" value="1"/>
</dbReference>
<dbReference type="PANTHER" id="PTHR12112:SF22">
    <property type="entry name" value="MANGANESE-DEPENDENT INORGANIC PYROPHOSPHATASE-RELATED"/>
    <property type="match status" value="1"/>
</dbReference>
<dbReference type="Pfam" id="PF01368">
    <property type="entry name" value="DHH"/>
    <property type="match status" value="1"/>
</dbReference>
<dbReference type="Pfam" id="PF02833">
    <property type="entry name" value="DHHA2"/>
    <property type="match status" value="1"/>
</dbReference>
<dbReference type="SMART" id="SM01131">
    <property type="entry name" value="DHHA2"/>
    <property type="match status" value="1"/>
</dbReference>
<dbReference type="SUPFAM" id="SSF64182">
    <property type="entry name" value="DHH phosphoesterases"/>
    <property type="match status" value="1"/>
</dbReference>
<reference key="1">
    <citation type="journal article" date="2003" name="Nature">
        <title>Genome sequence of Bacillus cereus and comparative analysis with Bacillus anthracis.</title>
        <authorList>
            <person name="Ivanova N."/>
            <person name="Sorokin A."/>
            <person name="Anderson I."/>
            <person name="Galleron N."/>
            <person name="Candelon B."/>
            <person name="Kapatral V."/>
            <person name="Bhattacharyya A."/>
            <person name="Reznik G."/>
            <person name="Mikhailova N."/>
            <person name="Lapidus A."/>
            <person name="Chu L."/>
            <person name="Mazur M."/>
            <person name="Goltsman E."/>
            <person name="Larsen N."/>
            <person name="D'Souza M."/>
            <person name="Walunas T."/>
            <person name="Grechkin Y."/>
            <person name="Pusch G."/>
            <person name="Haselkorn R."/>
            <person name="Fonstein M."/>
            <person name="Ehrlich S.D."/>
            <person name="Overbeek R."/>
            <person name="Kyrpides N.C."/>
        </authorList>
    </citation>
    <scope>NUCLEOTIDE SEQUENCE [LARGE SCALE GENOMIC DNA]</scope>
    <source>
        <strain>ATCC 14579 / DSM 31 / CCUG 7414 / JCM 2152 / NBRC 15305 / NCIMB 9373 / NCTC 2599 / NRRL B-3711</strain>
    </source>
</reference>